<accession>Q88YI7</accession>
<accession>F9ULZ7</accession>
<evidence type="ECO:0000255" key="1">
    <source>
        <dbReference type="HAMAP-Rule" id="MF_00205"/>
    </source>
</evidence>
<reference key="1">
    <citation type="journal article" date="2003" name="Proc. Natl. Acad. Sci. U.S.A.">
        <title>Complete genome sequence of Lactobacillus plantarum WCFS1.</title>
        <authorList>
            <person name="Kleerebezem M."/>
            <person name="Boekhorst J."/>
            <person name="van Kranenburg R."/>
            <person name="Molenaar D."/>
            <person name="Kuipers O.P."/>
            <person name="Leer R."/>
            <person name="Tarchini R."/>
            <person name="Peters S.A."/>
            <person name="Sandbrink H.M."/>
            <person name="Fiers M.W.E.J."/>
            <person name="Stiekema W."/>
            <person name="Klein Lankhorst R.M."/>
            <person name="Bron P.A."/>
            <person name="Hoffer S.M."/>
            <person name="Nierop Groot M.N."/>
            <person name="Kerkhoven R."/>
            <person name="De Vries M."/>
            <person name="Ursing B."/>
            <person name="De Vos W.M."/>
            <person name="Siezen R.J."/>
        </authorList>
    </citation>
    <scope>NUCLEOTIDE SEQUENCE [LARGE SCALE GENOMIC DNA]</scope>
    <source>
        <strain>ATCC BAA-793 / NCIMB 8826 / WCFS1</strain>
    </source>
</reference>
<reference key="2">
    <citation type="journal article" date="2012" name="J. Bacteriol.">
        <title>Complete resequencing and reannotation of the Lactobacillus plantarum WCFS1 genome.</title>
        <authorList>
            <person name="Siezen R.J."/>
            <person name="Francke C."/>
            <person name="Renckens B."/>
            <person name="Boekhorst J."/>
            <person name="Wels M."/>
            <person name="Kleerebezem M."/>
            <person name="van Hijum S.A."/>
        </authorList>
    </citation>
    <scope>NUCLEOTIDE SEQUENCE [LARGE SCALE GENOMIC DNA]</scope>
    <scope>GENOME REANNOTATION</scope>
    <source>
        <strain>ATCC BAA-793 / NCIMB 8826 / WCFS1</strain>
    </source>
</reference>
<dbReference type="EMBL" id="AL935263">
    <property type="protein sequence ID" value="CCC78236.1"/>
    <property type="molecule type" value="Genomic_DNA"/>
</dbReference>
<dbReference type="RefSeq" id="WP_003643969.1">
    <property type="nucleotide sequence ID" value="NC_004567.2"/>
</dbReference>
<dbReference type="RefSeq" id="YP_004888750.1">
    <property type="nucleotide sequence ID" value="NC_004567.2"/>
</dbReference>
<dbReference type="SMR" id="Q88YI7"/>
<dbReference type="STRING" id="220668.lp_0773"/>
<dbReference type="EnsemblBacteria" id="CCC78236">
    <property type="protein sequence ID" value="CCC78236"/>
    <property type="gene ID" value="lp_0773"/>
</dbReference>
<dbReference type="GeneID" id="77217297"/>
<dbReference type="KEGG" id="lpl:lp_0773"/>
<dbReference type="PATRIC" id="fig|220668.9.peg.653"/>
<dbReference type="eggNOG" id="COG0178">
    <property type="taxonomic scope" value="Bacteria"/>
</dbReference>
<dbReference type="HOGENOM" id="CLU_001370_0_2_9"/>
<dbReference type="OrthoDB" id="9809851at2"/>
<dbReference type="PhylomeDB" id="Q88YI7"/>
<dbReference type="Proteomes" id="UP000000432">
    <property type="component" value="Chromosome"/>
</dbReference>
<dbReference type="GO" id="GO:0005737">
    <property type="term" value="C:cytoplasm"/>
    <property type="evidence" value="ECO:0007669"/>
    <property type="project" value="UniProtKB-SubCell"/>
</dbReference>
<dbReference type="GO" id="GO:0009380">
    <property type="term" value="C:excinuclease repair complex"/>
    <property type="evidence" value="ECO:0007669"/>
    <property type="project" value="InterPro"/>
</dbReference>
<dbReference type="GO" id="GO:0005524">
    <property type="term" value="F:ATP binding"/>
    <property type="evidence" value="ECO:0007669"/>
    <property type="project" value="UniProtKB-UniRule"/>
</dbReference>
<dbReference type="GO" id="GO:0016887">
    <property type="term" value="F:ATP hydrolysis activity"/>
    <property type="evidence" value="ECO:0007669"/>
    <property type="project" value="InterPro"/>
</dbReference>
<dbReference type="GO" id="GO:0003677">
    <property type="term" value="F:DNA binding"/>
    <property type="evidence" value="ECO:0007669"/>
    <property type="project" value="UniProtKB-UniRule"/>
</dbReference>
<dbReference type="GO" id="GO:0009381">
    <property type="term" value="F:excinuclease ABC activity"/>
    <property type="evidence" value="ECO:0007669"/>
    <property type="project" value="UniProtKB-UniRule"/>
</dbReference>
<dbReference type="GO" id="GO:0008270">
    <property type="term" value="F:zinc ion binding"/>
    <property type="evidence" value="ECO:0007669"/>
    <property type="project" value="UniProtKB-UniRule"/>
</dbReference>
<dbReference type="GO" id="GO:0006289">
    <property type="term" value="P:nucleotide-excision repair"/>
    <property type="evidence" value="ECO:0007669"/>
    <property type="project" value="UniProtKB-UniRule"/>
</dbReference>
<dbReference type="GO" id="GO:0009432">
    <property type="term" value="P:SOS response"/>
    <property type="evidence" value="ECO:0007669"/>
    <property type="project" value="UniProtKB-UniRule"/>
</dbReference>
<dbReference type="CDD" id="cd03270">
    <property type="entry name" value="ABC_UvrA_I"/>
    <property type="match status" value="1"/>
</dbReference>
<dbReference type="CDD" id="cd03271">
    <property type="entry name" value="ABC_UvrA_II"/>
    <property type="match status" value="1"/>
</dbReference>
<dbReference type="FunFam" id="1.20.1580.10:FF:000002">
    <property type="entry name" value="UvrABC system protein A"/>
    <property type="match status" value="1"/>
</dbReference>
<dbReference type="Gene3D" id="1.10.8.280">
    <property type="entry name" value="ABC transporter ATPase domain-like"/>
    <property type="match status" value="1"/>
</dbReference>
<dbReference type="Gene3D" id="1.20.1580.10">
    <property type="entry name" value="ABC transporter ATPase like domain"/>
    <property type="match status" value="2"/>
</dbReference>
<dbReference type="Gene3D" id="3.30.1490.20">
    <property type="entry name" value="ATP-grasp fold, A domain"/>
    <property type="match status" value="1"/>
</dbReference>
<dbReference type="Gene3D" id="3.40.50.300">
    <property type="entry name" value="P-loop containing nucleotide triphosphate hydrolases"/>
    <property type="match status" value="2"/>
</dbReference>
<dbReference type="HAMAP" id="MF_00205">
    <property type="entry name" value="UvrA"/>
    <property type="match status" value="1"/>
</dbReference>
<dbReference type="InterPro" id="IPR003593">
    <property type="entry name" value="AAA+_ATPase"/>
</dbReference>
<dbReference type="InterPro" id="IPR003439">
    <property type="entry name" value="ABC_transporter-like_ATP-bd"/>
</dbReference>
<dbReference type="InterPro" id="IPR017871">
    <property type="entry name" value="ABC_transporter-like_CS"/>
</dbReference>
<dbReference type="InterPro" id="IPR013815">
    <property type="entry name" value="ATP_grasp_subdomain_1"/>
</dbReference>
<dbReference type="InterPro" id="IPR027417">
    <property type="entry name" value="P-loop_NTPase"/>
</dbReference>
<dbReference type="InterPro" id="IPR004602">
    <property type="entry name" value="UvrA"/>
</dbReference>
<dbReference type="InterPro" id="IPR041552">
    <property type="entry name" value="UvrA_DNA-bd"/>
</dbReference>
<dbReference type="InterPro" id="IPR041102">
    <property type="entry name" value="UvrA_inter"/>
</dbReference>
<dbReference type="NCBIfam" id="NF001503">
    <property type="entry name" value="PRK00349.1"/>
    <property type="match status" value="1"/>
</dbReference>
<dbReference type="NCBIfam" id="TIGR00630">
    <property type="entry name" value="uvra"/>
    <property type="match status" value="1"/>
</dbReference>
<dbReference type="PANTHER" id="PTHR43152">
    <property type="entry name" value="UVRABC SYSTEM PROTEIN A"/>
    <property type="match status" value="1"/>
</dbReference>
<dbReference type="PANTHER" id="PTHR43152:SF3">
    <property type="entry name" value="UVRABC SYSTEM PROTEIN A"/>
    <property type="match status" value="1"/>
</dbReference>
<dbReference type="Pfam" id="PF17755">
    <property type="entry name" value="UvrA_DNA-bind"/>
    <property type="match status" value="1"/>
</dbReference>
<dbReference type="Pfam" id="PF17760">
    <property type="entry name" value="UvrA_inter"/>
    <property type="match status" value="1"/>
</dbReference>
<dbReference type="SMART" id="SM00382">
    <property type="entry name" value="AAA"/>
    <property type="match status" value="2"/>
</dbReference>
<dbReference type="SUPFAM" id="SSF52540">
    <property type="entry name" value="P-loop containing nucleoside triphosphate hydrolases"/>
    <property type="match status" value="2"/>
</dbReference>
<dbReference type="PROSITE" id="PS00211">
    <property type="entry name" value="ABC_TRANSPORTER_1"/>
    <property type="match status" value="2"/>
</dbReference>
<dbReference type="PROSITE" id="PS50893">
    <property type="entry name" value="ABC_TRANSPORTER_2"/>
    <property type="match status" value="1"/>
</dbReference>
<protein>
    <recommendedName>
        <fullName evidence="1">UvrABC system protein A</fullName>
        <shortName evidence="1">UvrA protein</shortName>
    </recommendedName>
    <alternativeName>
        <fullName evidence="1">Excinuclease ABC subunit A</fullName>
    </alternativeName>
</protein>
<name>UVRA_LACPL</name>
<gene>
    <name evidence="1" type="primary">uvrA</name>
    <name type="ordered locus">lp_0773</name>
</gene>
<comment type="function">
    <text evidence="1">The UvrABC repair system catalyzes the recognition and processing of DNA lesions. UvrA is an ATPase and a DNA-binding protein. A damage recognition complex composed of 2 UvrA and 2 UvrB subunits scans DNA for abnormalities. When the presence of a lesion has been verified by UvrB, the UvrA molecules dissociate.</text>
</comment>
<comment type="subunit">
    <text evidence="1">Forms a heterotetramer with UvrB during the search for lesions.</text>
</comment>
<comment type="subcellular location">
    <subcellularLocation>
        <location evidence="1">Cytoplasm</location>
    </subcellularLocation>
</comment>
<comment type="similarity">
    <text evidence="1">Belongs to the ABC transporter superfamily. UvrA family.</text>
</comment>
<proteinExistence type="inferred from homology"/>
<feature type="chain" id="PRO_0000093057" description="UvrABC system protein A">
    <location>
        <begin position="1"/>
        <end position="951"/>
    </location>
</feature>
<feature type="domain" description="ABC transporter 1" evidence="1">
    <location>
        <begin position="309"/>
        <end position="587"/>
    </location>
</feature>
<feature type="domain" description="ABC transporter 2" evidence="1">
    <location>
        <begin position="607"/>
        <end position="935"/>
    </location>
</feature>
<feature type="zinc finger region" description="C4-type" evidence="1">
    <location>
        <begin position="252"/>
        <end position="279"/>
    </location>
</feature>
<feature type="zinc finger region" description="C4-type" evidence="1">
    <location>
        <begin position="738"/>
        <end position="764"/>
    </location>
</feature>
<feature type="binding site" evidence="1">
    <location>
        <begin position="33"/>
        <end position="40"/>
    </location>
    <ligand>
        <name>ATP</name>
        <dbReference type="ChEBI" id="CHEBI:30616"/>
        <label>1</label>
    </ligand>
</feature>
<feature type="binding site" evidence="1">
    <location>
        <begin position="639"/>
        <end position="646"/>
    </location>
    <ligand>
        <name>ATP</name>
        <dbReference type="ChEBI" id="CHEBI:30616"/>
        <label>2</label>
    </ligand>
</feature>
<keyword id="KW-0067">ATP-binding</keyword>
<keyword id="KW-0963">Cytoplasm</keyword>
<keyword id="KW-0227">DNA damage</keyword>
<keyword id="KW-0228">DNA excision</keyword>
<keyword id="KW-0234">DNA repair</keyword>
<keyword id="KW-0238">DNA-binding</keyword>
<keyword id="KW-0267">Excision nuclease</keyword>
<keyword id="KW-0479">Metal-binding</keyword>
<keyword id="KW-0547">Nucleotide-binding</keyword>
<keyword id="KW-1185">Reference proteome</keyword>
<keyword id="KW-0677">Repeat</keyword>
<keyword id="KW-0742">SOS response</keyword>
<keyword id="KW-0862">Zinc</keyword>
<keyword id="KW-0863">Zinc-finger</keyword>
<sequence>MANDKIVIHGARAHNLKDIDVTIPRDKLVVITGLSGSGKSSLAFDTLYAEGQRRYVESLSAYARQFLGQMQKPDVDSIDGLSPAISIDQKTTSKNPRSTVGTVTEINDYLRLLWARVGEPICPNDGTPIASQTVEQMVDRIQKLPERTKLQILSPIVRQKKGEHKKIFEKIKREGFVRVRVDGDIHDISETFELNKNQQHTIEIVIDRIVVKSGDRSRLFDSFEAALRLSGGYAIADVIGGEPIMFSEHYACPICGFTVGELEPRLFSFNAPQGACPDCEGLGIKLEVDEDLVVPDKSLTLAEGALAPWNPISSQYYPEMLKQACEQLEIPMDVPYEDLSKADQQTVLYGSNGKTFHFHYQNDFGGVRDVDAVFEGVINNVDRRYHETNSDFTRDVMRKYMTELTCQTCHGFRLNRKALSVKVGGEHIGMVSDLAIGKELDFFNELSLSEQSLVIAKPILKEIRDRLSFLQNVGLAYLTLSRSARTLSGGEAQRIRLATQIGSNLSGVLYILDEPSIGLHQRDNDRLIGSLKKMRDLGNTLIVVEHDEDTMRAADYIVDIGPGAGENGGEVMAAGTPKQVARSRKSLTGQYLSGKRFIPLPETRRPGNGKKIRITGAAENNLKQIDVDFPLGEFVVVTGVSGSGKSTLVNDVLKRVLAQKLNRNSEKPGKYKSVSGIKNIERLVNIDQSPIGRTPRSNPATYTGVFDNIRDLFAQTNEAKLRGYKKGRFSFNTKGGRCEACHGDGILKIEMNFLPDVFVPCEVCHGKQYNSETLEVEYKGKNIADVLQMTASEAVKFFEPIPKIRRKLQTLVDVGLGYVKLGQPATTLSGGEAQRMKLASELHKQQSGKNFYILDEPTTGLHSEDIRRLIGVLDRLVDAGNTVLIIEHNLDVVKSADYLIDLGPEGGDGGGTIVATGTPEQVAEVAESYTGQYLKPVLERDRAREATAPAK</sequence>
<organism>
    <name type="scientific">Lactiplantibacillus plantarum (strain ATCC BAA-793 / NCIMB 8826 / WCFS1)</name>
    <name type="common">Lactobacillus plantarum</name>
    <dbReference type="NCBI Taxonomy" id="220668"/>
    <lineage>
        <taxon>Bacteria</taxon>
        <taxon>Bacillati</taxon>
        <taxon>Bacillota</taxon>
        <taxon>Bacilli</taxon>
        <taxon>Lactobacillales</taxon>
        <taxon>Lactobacillaceae</taxon>
        <taxon>Lactiplantibacillus</taxon>
    </lineage>
</organism>